<proteinExistence type="inferred from homology"/>
<protein>
    <recommendedName>
        <fullName evidence="1">ATP synthase subunit delta</fullName>
    </recommendedName>
    <alternativeName>
        <fullName evidence="1">ATP synthase F(1) sector subunit delta</fullName>
    </alternativeName>
    <alternativeName>
        <fullName evidence="1">F-type ATPase subunit delta</fullName>
        <shortName evidence="1">F-ATPase subunit delta</shortName>
    </alternativeName>
</protein>
<reference key="1">
    <citation type="journal article" date="2004" name="Nat. Genet.">
        <title>Evidence in the Legionella pneumophila genome for exploitation of host cell functions and high genome plasticity.</title>
        <authorList>
            <person name="Cazalet C."/>
            <person name="Rusniok C."/>
            <person name="Brueggemann H."/>
            <person name="Zidane N."/>
            <person name="Magnier A."/>
            <person name="Ma L."/>
            <person name="Tichit M."/>
            <person name="Jarraud S."/>
            <person name="Bouchier C."/>
            <person name="Vandenesch F."/>
            <person name="Kunst F."/>
            <person name="Etienne J."/>
            <person name="Glaser P."/>
            <person name="Buchrieser C."/>
        </authorList>
    </citation>
    <scope>NUCLEOTIDE SEQUENCE [LARGE SCALE GENOMIC DNA]</scope>
    <source>
        <strain>Lens</strain>
    </source>
</reference>
<keyword id="KW-0066">ATP synthesis</keyword>
<keyword id="KW-0997">Cell inner membrane</keyword>
<keyword id="KW-1003">Cell membrane</keyword>
<keyword id="KW-0139">CF(1)</keyword>
<keyword id="KW-0375">Hydrogen ion transport</keyword>
<keyword id="KW-0406">Ion transport</keyword>
<keyword id="KW-0472">Membrane</keyword>
<keyword id="KW-0813">Transport</keyword>
<dbReference type="EMBL" id="CR628337">
    <property type="protein sequence ID" value="CAH17157.1"/>
    <property type="molecule type" value="Genomic_DNA"/>
</dbReference>
<dbReference type="RefSeq" id="WP_011216821.1">
    <property type="nucleotide sequence ID" value="NC_006369.1"/>
</dbReference>
<dbReference type="SMR" id="Q5WSG5"/>
<dbReference type="KEGG" id="lpf:lpl2913"/>
<dbReference type="LegioList" id="lpl2913"/>
<dbReference type="HOGENOM" id="CLU_085114_3_0_6"/>
<dbReference type="Proteomes" id="UP000002517">
    <property type="component" value="Chromosome"/>
</dbReference>
<dbReference type="GO" id="GO:0005886">
    <property type="term" value="C:plasma membrane"/>
    <property type="evidence" value="ECO:0007669"/>
    <property type="project" value="UniProtKB-SubCell"/>
</dbReference>
<dbReference type="GO" id="GO:0045259">
    <property type="term" value="C:proton-transporting ATP synthase complex"/>
    <property type="evidence" value="ECO:0007669"/>
    <property type="project" value="UniProtKB-KW"/>
</dbReference>
<dbReference type="GO" id="GO:0046933">
    <property type="term" value="F:proton-transporting ATP synthase activity, rotational mechanism"/>
    <property type="evidence" value="ECO:0007669"/>
    <property type="project" value="UniProtKB-UniRule"/>
</dbReference>
<dbReference type="Gene3D" id="1.10.520.20">
    <property type="entry name" value="N-terminal domain of the delta subunit of the F1F0-ATP synthase"/>
    <property type="match status" value="1"/>
</dbReference>
<dbReference type="HAMAP" id="MF_01416">
    <property type="entry name" value="ATP_synth_delta_bact"/>
    <property type="match status" value="1"/>
</dbReference>
<dbReference type="InterPro" id="IPR026015">
    <property type="entry name" value="ATP_synth_OSCP/delta_N_sf"/>
</dbReference>
<dbReference type="InterPro" id="IPR020781">
    <property type="entry name" value="ATPase_OSCP/d_CS"/>
</dbReference>
<dbReference type="InterPro" id="IPR000711">
    <property type="entry name" value="ATPase_OSCP/dsu"/>
</dbReference>
<dbReference type="NCBIfam" id="TIGR01145">
    <property type="entry name" value="ATP_synt_delta"/>
    <property type="match status" value="1"/>
</dbReference>
<dbReference type="NCBIfam" id="NF004402">
    <property type="entry name" value="PRK05758.2-2"/>
    <property type="match status" value="1"/>
</dbReference>
<dbReference type="PANTHER" id="PTHR11910">
    <property type="entry name" value="ATP SYNTHASE DELTA CHAIN"/>
    <property type="match status" value="1"/>
</dbReference>
<dbReference type="Pfam" id="PF00213">
    <property type="entry name" value="OSCP"/>
    <property type="match status" value="1"/>
</dbReference>
<dbReference type="PRINTS" id="PR00125">
    <property type="entry name" value="ATPASEDELTA"/>
</dbReference>
<dbReference type="SUPFAM" id="SSF47928">
    <property type="entry name" value="N-terminal domain of the delta subunit of the F1F0-ATP synthase"/>
    <property type="match status" value="1"/>
</dbReference>
<dbReference type="PROSITE" id="PS00389">
    <property type="entry name" value="ATPASE_DELTA"/>
    <property type="match status" value="1"/>
</dbReference>
<gene>
    <name evidence="1" type="primary">atpH</name>
    <name type="ordered locus">lpl2913</name>
</gene>
<sequence length="180" mass="19917">MSDSTTIARPYAKAIFEHALAEKKLSEWSEYLTLLAQVVLTPQATQFIANPASTDEQQIELLIEICGSKFKKNDALNNLIKLLTTNKRLMLLPEIKALYEVYRAEQEKILEVDVVSYSELTPAQQQRLSESLSQRLSRKVSLKISIDPSLLGGALIRAGDLVIDGSVRGKLNMLGTSLAA</sequence>
<organism>
    <name type="scientific">Legionella pneumophila (strain Lens)</name>
    <dbReference type="NCBI Taxonomy" id="297245"/>
    <lineage>
        <taxon>Bacteria</taxon>
        <taxon>Pseudomonadati</taxon>
        <taxon>Pseudomonadota</taxon>
        <taxon>Gammaproteobacteria</taxon>
        <taxon>Legionellales</taxon>
        <taxon>Legionellaceae</taxon>
        <taxon>Legionella</taxon>
    </lineage>
</organism>
<name>ATPD_LEGPL</name>
<feature type="chain" id="PRO_0000371017" description="ATP synthase subunit delta">
    <location>
        <begin position="1"/>
        <end position="180"/>
    </location>
</feature>
<accession>Q5WSG5</accession>
<evidence type="ECO:0000255" key="1">
    <source>
        <dbReference type="HAMAP-Rule" id="MF_01416"/>
    </source>
</evidence>
<comment type="function">
    <text evidence="1">F(1)F(0) ATP synthase produces ATP from ADP in the presence of a proton or sodium gradient. F-type ATPases consist of two structural domains, F(1) containing the extramembraneous catalytic core and F(0) containing the membrane proton channel, linked together by a central stalk and a peripheral stalk. During catalysis, ATP synthesis in the catalytic domain of F(1) is coupled via a rotary mechanism of the central stalk subunits to proton translocation.</text>
</comment>
<comment type="function">
    <text evidence="1">This protein is part of the stalk that links CF(0) to CF(1). It either transmits conformational changes from CF(0) to CF(1) or is implicated in proton conduction.</text>
</comment>
<comment type="subunit">
    <text evidence="1">F-type ATPases have 2 components, F(1) - the catalytic core - and F(0) - the membrane proton channel. F(1) has five subunits: alpha(3), beta(3), gamma(1), delta(1), epsilon(1). F(0) has three main subunits: a(1), b(2) and c(10-14). The alpha and beta chains form an alternating ring which encloses part of the gamma chain. F(1) is attached to F(0) by a central stalk formed by the gamma and epsilon chains, while a peripheral stalk is formed by the delta and b chains.</text>
</comment>
<comment type="subcellular location">
    <subcellularLocation>
        <location evidence="1">Cell inner membrane</location>
        <topology evidence="1">Peripheral membrane protein</topology>
    </subcellularLocation>
</comment>
<comment type="similarity">
    <text evidence="1">Belongs to the ATPase delta chain family.</text>
</comment>